<feature type="chain" id="PRO_1000205917" description="Small ribosomal subunit protein uS12">
    <location>
        <begin position="1"/>
        <end position="140"/>
    </location>
</feature>
<feature type="modified residue" description="3-methylthioaspartic acid" evidence="1">
    <location>
        <position position="102"/>
    </location>
</feature>
<gene>
    <name evidence="2" type="primary">rpsL</name>
    <name type="ordered locus">GWCH70_0106</name>
</gene>
<name>RS12_GEOSW</name>
<comment type="function">
    <text evidence="2">With S4 and S5 plays an important role in translational accuracy.</text>
</comment>
<comment type="function">
    <text evidence="2">Interacts with and stabilizes bases of the 16S rRNA that are involved in tRNA selection in the A site and with the mRNA backbone. Located at the interface of the 30S and 50S subunits, it traverses the body of the 30S subunit contacting proteins on the other side and probably holding the rRNA structure together. The combined cluster of proteins S8, S12 and S17 appears to hold together the shoulder and platform of the 30S subunit.</text>
</comment>
<comment type="subunit">
    <text evidence="2">Part of the 30S ribosomal subunit. Contacts proteins S8 and S17. May interact with IF1 in the 30S initiation complex.</text>
</comment>
<comment type="similarity">
    <text evidence="2">Belongs to the universal ribosomal protein uS12 family.</text>
</comment>
<sequence length="140" mass="15491">MPTINQLVRKGREKKVVKSKSPALNKGYNSFKKIQTNVSSPQKRGVCTRVGTMTPKKPNSALRKYARVRLTNGIEVTAYIPGIGHNLQEHSVVLIRGGRVKDLPGVRYHIIRGALDTAGVANRMQGRSKYGAKKPKESKK</sequence>
<accession>C5D3R2</accession>
<reference key="1">
    <citation type="submission" date="2009-06" db="EMBL/GenBank/DDBJ databases">
        <title>Complete sequence of chromosome of Geopacillus sp. WCH70.</title>
        <authorList>
            <consortium name="US DOE Joint Genome Institute"/>
            <person name="Lucas S."/>
            <person name="Copeland A."/>
            <person name="Lapidus A."/>
            <person name="Glavina del Rio T."/>
            <person name="Dalin E."/>
            <person name="Tice H."/>
            <person name="Bruce D."/>
            <person name="Goodwin L."/>
            <person name="Pitluck S."/>
            <person name="Chertkov O."/>
            <person name="Brettin T."/>
            <person name="Detter J.C."/>
            <person name="Han C."/>
            <person name="Larimer F."/>
            <person name="Land M."/>
            <person name="Hauser L."/>
            <person name="Kyrpides N."/>
            <person name="Mikhailova N."/>
            <person name="Brumm P."/>
            <person name="Mead D.A."/>
            <person name="Richardson P."/>
        </authorList>
    </citation>
    <scope>NUCLEOTIDE SEQUENCE [LARGE SCALE GENOMIC DNA]</scope>
    <source>
        <strain>WCH70</strain>
    </source>
</reference>
<protein>
    <recommendedName>
        <fullName evidence="2">Small ribosomal subunit protein uS12</fullName>
    </recommendedName>
    <alternativeName>
        <fullName evidence="3">30S ribosomal protein S12</fullName>
    </alternativeName>
</protein>
<dbReference type="EMBL" id="CP001638">
    <property type="protein sequence ID" value="ACS23046.1"/>
    <property type="molecule type" value="Genomic_DNA"/>
</dbReference>
<dbReference type="SMR" id="C5D3R2"/>
<dbReference type="STRING" id="471223.GWCH70_0106"/>
<dbReference type="KEGG" id="gwc:GWCH70_0106"/>
<dbReference type="eggNOG" id="COG0048">
    <property type="taxonomic scope" value="Bacteria"/>
</dbReference>
<dbReference type="HOGENOM" id="CLU_104295_1_1_9"/>
<dbReference type="OrthoDB" id="9802366at2"/>
<dbReference type="GO" id="GO:0015935">
    <property type="term" value="C:small ribosomal subunit"/>
    <property type="evidence" value="ECO:0007669"/>
    <property type="project" value="InterPro"/>
</dbReference>
<dbReference type="GO" id="GO:0019843">
    <property type="term" value="F:rRNA binding"/>
    <property type="evidence" value="ECO:0007669"/>
    <property type="project" value="UniProtKB-UniRule"/>
</dbReference>
<dbReference type="GO" id="GO:0003735">
    <property type="term" value="F:structural constituent of ribosome"/>
    <property type="evidence" value="ECO:0007669"/>
    <property type="project" value="InterPro"/>
</dbReference>
<dbReference type="GO" id="GO:0000049">
    <property type="term" value="F:tRNA binding"/>
    <property type="evidence" value="ECO:0007669"/>
    <property type="project" value="UniProtKB-UniRule"/>
</dbReference>
<dbReference type="GO" id="GO:0006412">
    <property type="term" value="P:translation"/>
    <property type="evidence" value="ECO:0007669"/>
    <property type="project" value="UniProtKB-UniRule"/>
</dbReference>
<dbReference type="CDD" id="cd03368">
    <property type="entry name" value="Ribosomal_S12"/>
    <property type="match status" value="1"/>
</dbReference>
<dbReference type="FunFam" id="2.40.50.140:FF:000001">
    <property type="entry name" value="30S ribosomal protein S12"/>
    <property type="match status" value="1"/>
</dbReference>
<dbReference type="Gene3D" id="2.40.50.140">
    <property type="entry name" value="Nucleic acid-binding proteins"/>
    <property type="match status" value="1"/>
</dbReference>
<dbReference type="HAMAP" id="MF_00403_B">
    <property type="entry name" value="Ribosomal_uS12_B"/>
    <property type="match status" value="1"/>
</dbReference>
<dbReference type="InterPro" id="IPR012340">
    <property type="entry name" value="NA-bd_OB-fold"/>
</dbReference>
<dbReference type="InterPro" id="IPR006032">
    <property type="entry name" value="Ribosomal_uS12"/>
</dbReference>
<dbReference type="InterPro" id="IPR005679">
    <property type="entry name" value="Ribosomal_uS12_bac"/>
</dbReference>
<dbReference type="NCBIfam" id="TIGR00981">
    <property type="entry name" value="rpsL_bact"/>
    <property type="match status" value="1"/>
</dbReference>
<dbReference type="PANTHER" id="PTHR11652">
    <property type="entry name" value="30S RIBOSOMAL PROTEIN S12 FAMILY MEMBER"/>
    <property type="match status" value="1"/>
</dbReference>
<dbReference type="Pfam" id="PF00164">
    <property type="entry name" value="Ribosom_S12_S23"/>
    <property type="match status" value="1"/>
</dbReference>
<dbReference type="PIRSF" id="PIRSF002133">
    <property type="entry name" value="Ribosomal_S12/S23"/>
    <property type="match status" value="1"/>
</dbReference>
<dbReference type="PRINTS" id="PR01034">
    <property type="entry name" value="RIBOSOMALS12"/>
</dbReference>
<dbReference type="SUPFAM" id="SSF50249">
    <property type="entry name" value="Nucleic acid-binding proteins"/>
    <property type="match status" value="1"/>
</dbReference>
<dbReference type="PROSITE" id="PS00055">
    <property type="entry name" value="RIBOSOMAL_S12"/>
    <property type="match status" value="1"/>
</dbReference>
<keyword id="KW-0488">Methylation</keyword>
<keyword id="KW-0687">Ribonucleoprotein</keyword>
<keyword id="KW-0689">Ribosomal protein</keyword>
<keyword id="KW-0694">RNA-binding</keyword>
<keyword id="KW-0699">rRNA-binding</keyword>
<keyword id="KW-0820">tRNA-binding</keyword>
<evidence type="ECO:0000250" key="1"/>
<evidence type="ECO:0000255" key="2">
    <source>
        <dbReference type="HAMAP-Rule" id="MF_00403"/>
    </source>
</evidence>
<evidence type="ECO:0000305" key="3"/>
<proteinExistence type="inferred from homology"/>
<organism>
    <name type="scientific">Geobacillus sp. (strain WCH70)</name>
    <dbReference type="NCBI Taxonomy" id="471223"/>
    <lineage>
        <taxon>Bacteria</taxon>
        <taxon>Bacillati</taxon>
        <taxon>Bacillota</taxon>
        <taxon>Bacilli</taxon>
        <taxon>Bacillales</taxon>
        <taxon>Anoxybacillaceae</taxon>
        <taxon>Geobacillus</taxon>
    </lineage>
</organism>